<sequence>MSKTPLTAKAIDAAQPQDKPYKLTDSLTPGLFLLVHPNGSKYWRFRYWLNKREFLQAIGVYPLITLKEARRRATESRSLIANGINPVEQARKEKAIDALNMAAGFKKVAEDWFATRVGGWSESYAKQVRSALEKDVYPVLGKRSIVDITARDVLALLQKKERTAPEQARKLRRRIGEIFKFAVITELVTRNPVADLDTALKARRPGHNAWIPISEIPAFYKALERAGSVQIQTAIRLLILTALRTAELRLCRWEWINLEDATITLPAEVMKARRPHVVPLSRQAVELLQDQFTRSGYSAFVFPGRFMDKPLSASAILKALERIGYKSIATGHGWRTTFSTALNESGRYSPDWIEIQLAHVPKGIRGVYNQAAYLKQRRAMMQDYADAIDSILAGNGNPLEPE</sequence>
<proteinExistence type="inferred from homology"/>
<accession>P76542</accession>
<keyword id="KW-0229">DNA integration</keyword>
<keyword id="KW-0233">DNA recombination</keyword>
<keyword id="KW-0238">DNA-binding</keyword>
<keyword id="KW-1185">Reference proteome</keyword>
<keyword id="KW-1179">Viral genome integration</keyword>
<keyword id="KW-1160">Virus entry into host cell</keyword>
<organism>
    <name type="scientific">Escherichia coli (strain K12)</name>
    <dbReference type="NCBI Taxonomy" id="83333"/>
    <lineage>
        <taxon>Bacteria</taxon>
        <taxon>Pseudomonadati</taxon>
        <taxon>Pseudomonadota</taxon>
        <taxon>Gammaproteobacteria</taxon>
        <taxon>Enterobacterales</taxon>
        <taxon>Enterobacteriaceae</taxon>
        <taxon>Escherichia</taxon>
    </lineage>
</organism>
<feature type="chain" id="PRO_0000197519" description="Prophage integrase IntZ">
    <location>
        <begin position="1"/>
        <end position="402"/>
    </location>
</feature>
<feature type="domain" description="Core-binding (CB)" evidence="2">
    <location>
        <begin position="103"/>
        <end position="183"/>
    </location>
</feature>
<feature type="domain" description="Tyr recombinase" evidence="1">
    <location>
        <begin position="206"/>
        <end position="381"/>
    </location>
</feature>
<feature type="active site" evidence="1">
    <location>
        <position position="244"/>
    </location>
</feature>
<feature type="active site" evidence="1">
    <location>
        <position position="271"/>
    </location>
</feature>
<feature type="active site" evidence="1">
    <location>
        <position position="332"/>
    </location>
</feature>
<feature type="active site" evidence="1">
    <location>
        <position position="335"/>
    </location>
</feature>
<feature type="active site" evidence="1">
    <location>
        <position position="359"/>
    </location>
</feature>
<feature type="active site" description="O-(3'-phospho-DNA)-tyrosine intermediate" evidence="1">
    <location>
        <position position="368"/>
    </location>
</feature>
<dbReference type="EMBL" id="U00096">
    <property type="protein sequence ID" value="AAC75495.2"/>
    <property type="molecule type" value="Genomic_DNA"/>
</dbReference>
<dbReference type="PIR" id="A65019">
    <property type="entry name" value="A65019"/>
</dbReference>
<dbReference type="RefSeq" id="NP_416937.2">
    <property type="nucleotide sequence ID" value="NC_000913.3"/>
</dbReference>
<dbReference type="RefSeq" id="WP_000047773.1">
    <property type="nucleotide sequence ID" value="NZ_JACEFS010000004.1"/>
</dbReference>
<dbReference type="SMR" id="P76542"/>
<dbReference type="DIP" id="DIP-10042N"/>
<dbReference type="FunCoup" id="P76542">
    <property type="interactions" value="5"/>
</dbReference>
<dbReference type="STRING" id="511145.b2442"/>
<dbReference type="PaxDb" id="511145-b2442"/>
<dbReference type="EnsemblBacteria" id="AAC75495">
    <property type="protein sequence ID" value="AAC75495"/>
    <property type="gene ID" value="b2442"/>
</dbReference>
<dbReference type="GeneID" id="946923"/>
<dbReference type="KEGG" id="eco:b2442"/>
<dbReference type="KEGG" id="ecoc:C3026_13560"/>
<dbReference type="PATRIC" id="fig|511145.12.peg.2537"/>
<dbReference type="EchoBASE" id="EB3924"/>
<dbReference type="eggNOG" id="COG0582">
    <property type="taxonomic scope" value="Bacteria"/>
</dbReference>
<dbReference type="InParanoid" id="P76542"/>
<dbReference type="OMA" id="EASINMV"/>
<dbReference type="OrthoDB" id="9795573at2"/>
<dbReference type="PhylomeDB" id="P76542"/>
<dbReference type="BioCyc" id="EcoCyc:G7272-MONOMER"/>
<dbReference type="PRO" id="PR:P76542"/>
<dbReference type="Proteomes" id="UP000000625">
    <property type="component" value="Chromosome"/>
</dbReference>
<dbReference type="GO" id="GO:0003677">
    <property type="term" value="F:DNA binding"/>
    <property type="evidence" value="ECO:0007669"/>
    <property type="project" value="UniProtKB-KW"/>
</dbReference>
<dbReference type="GO" id="GO:0008979">
    <property type="term" value="F:prophage integrase activity"/>
    <property type="evidence" value="ECO:0000318"/>
    <property type="project" value="GO_Central"/>
</dbReference>
<dbReference type="GO" id="GO:0006310">
    <property type="term" value="P:DNA recombination"/>
    <property type="evidence" value="ECO:0007669"/>
    <property type="project" value="UniProtKB-KW"/>
</dbReference>
<dbReference type="GO" id="GO:0032359">
    <property type="term" value="P:provirus excision"/>
    <property type="evidence" value="ECO:0000318"/>
    <property type="project" value="GO_Central"/>
</dbReference>
<dbReference type="GO" id="GO:0046718">
    <property type="term" value="P:symbiont entry into host cell"/>
    <property type="evidence" value="ECO:0007669"/>
    <property type="project" value="UniProtKB-KW"/>
</dbReference>
<dbReference type="GO" id="GO:0044826">
    <property type="term" value="P:viral genome integration into host DNA"/>
    <property type="evidence" value="ECO:0007669"/>
    <property type="project" value="UniProtKB-KW"/>
</dbReference>
<dbReference type="CDD" id="cd00801">
    <property type="entry name" value="INT_P4_C"/>
    <property type="match status" value="1"/>
</dbReference>
<dbReference type="Gene3D" id="1.10.150.130">
    <property type="match status" value="1"/>
</dbReference>
<dbReference type="Gene3D" id="3.30.160.390">
    <property type="entry name" value="Integrase, DNA-binding domain"/>
    <property type="match status" value="1"/>
</dbReference>
<dbReference type="Gene3D" id="1.10.443.10">
    <property type="entry name" value="Intergrase catalytic core"/>
    <property type="match status" value="1"/>
</dbReference>
<dbReference type="InterPro" id="IPR044068">
    <property type="entry name" value="CB"/>
</dbReference>
<dbReference type="InterPro" id="IPR011010">
    <property type="entry name" value="DNA_brk_join_enz"/>
</dbReference>
<dbReference type="InterPro" id="IPR013762">
    <property type="entry name" value="Integrase-like_cat_sf"/>
</dbReference>
<dbReference type="InterPro" id="IPR002104">
    <property type="entry name" value="Integrase_catalytic"/>
</dbReference>
<dbReference type="InterPro" id="IPR038488">
    <property type="entry name" value="Integrase_DNA-bd_sf"/>
</dbReference>
<dbReference type="InterPro" id="IPR025166">
    <property type="entry name" value="Integrase_DNA_bind_dom"/>
</dbReference>
<dbReference type="InterPro" id="IPR010998">
    <property type="entry name" value="Integrase_recombinase_N"/>
</dbReference>
<dbReference type="InterPro" id="IPR053876">
    <property type="entry name" value="Phage_int_M"/>
</dbReference>
<dbReference type="InterPro" id="IPR050808">
    <property type="entry name" value="Phage_Integrase"/>
</dbReference>
<dbReference type="PANTHER" id="PTHR30629">
    <property type="entry name" value="PROPHAGE INTEGRASE"/>
    <property type="match status" value="1"/>
</dbReference>
<dbReference type="PANTHER" id="PTHR30629:SF2">
    <property type="entry name" value="PROPHAGE INTEGRASE INTS-RELATED"/>
    <property type="match status" value="1"/>
</dbReference>
<dbReference type="Pfam" id="PF13356">
    <property type="entry name" value="Arm-DNA-bind_3"/>
    <property type="match status" value="1"/>
</dbReference>
<dbReference type="Pfam" id="PF22022">
    <property type="entry name" value="Phage_int_M"/>
    <property type="match status" value="1"/>
</dbReference>
<dbReference type="Pfam" id="PF00589">
    <property type="entry name" value="Phage_integrase"/>
    <property type="match status" value="1"/>
</dbReference>
<dbReference type="SUPFAM" id="SSF56349">
    <property type="entry name" value="DNA breaking-rejoining enzymes"/>
    <property type="match status" value="1"/>
</dbReference>
<dbReference type="PROSITE" id="PS51900">
    <property type="entry name" value="CB"/>
    <property type="match status" value="1"/>
</dbReference>
<dbReference type="PROSITE" id="PS51898">
    <property type="entry name" value="TYR_RECOMBINASE"/>
    <property type="match status" value="1"/>
</dbReference>
<name>INTZ_ECOLI</name>
<gene>
    <name type="primary">intZ</name>
    <name type="ordered locus">b2442</name>
</gene>
<comment type="function">
    <text>Integrase is necessary for integration of the phage into the host genome by site-specific recombination. In conjunction with excisionase, integrase is also necessary for excision of the prophage from the host genome.</text>
</comment>
<comment type="similarity">
    <text evidence="3">Belongs to the 'phage' integrase family.</text>
</comment>
<evidence type="ECO:0000255" key="1">
    <source>
        <dbReference type="PROSITE-ProRule" id="PRU01246"/>
    </source>
</evidence>
<evidence type="ECO:0000255" key="2">
    <source>
        <dbReference type="PROSITE-ProRule" id="PRU01248"/>
    </source>
</evidence>
<evidence type="ECO:0000305" key="3"/>
<reference key="1">
    <citation type="journal article" date="1997" name="Science">
        <title>The complete genome sequence of Escherichia coli K-12.</title>
        <authorList>
            <person name="Blattner F.R."/>
            <person name="Plunkett G. III"/>
            <person name="Bloch C.A."/>
            <person name="Perna N.T."/>
            <person name="Burland V."/>
            <person name="Riley M."/>
            <person name="Collado-Vides J."/>
            <person name="Glasner J.D."/>
            <person name="Rode C.K."/>
            <person name="Mayhew G.F."/>
            <person name="Gregor J."/>
            <person name="Davis N.W."/>
            <person name="Kirkpatrick H.A."/>
            <person name="Goeden M.A."/>
            <person name="Rose D.J."/>
            <person name="Mau B."/>
            <person name="Shao Y."/>
        </authorList>
    </citation>
    <scope>NUCLEOTIDE SEQUENCE [LARGE SCALE GENOMIC DNA]</scope>
    <source>
        <strain>K12 / MG1655 / ATCC 47076</strain>
    </source>
</reference>
<protein>
    <recommendedName>
        <fullName evidence="3">Prophage integrase IntZ</fullName>
    </recommendedName>
    <alternativeName>
        <fullName>Putative prophage CPZ-55 integrase</fullName>
    </alternativeName>
</protein>